<dbReference type="EMBL" id="AF226275">
    <property type="protein sequence ID" value="AAF61916.1"/>
    <property type="status" value="ALT_INIT"/>
    <property type="molecule type" value="Genomic_DNA"/>
</dbReference>
<dbReference type="RefSeq" id="WP_000091194.1">
    <property type="nucleotide sequence ID" value="NZ_WIDC01000114.1"/>
</dbReference>
<dbReference type="SMR" id="P0A2S6"/>
<dbReference type="PATRIC" id="fig|149539.316.peg.1655"/>
<dbReference type="GO" id="GO:0003700">
    <property type="term" value="F:DNA-binding transcription factor activity"/>
    <property type="evidence" value="ECO:0007669"/>
    <property type="project" value="InterPro"/>
</dbReference>
<dbReference type="GO" id="GO:0043565">
    <property type="term" value="F:sequence-specific DNA binding"/>
    <property type="evidence" value="ECO:0007669"/>
    <property type="project" value="InterPro"/>
</dbReference>
<dbReference type="GO" id="GO:0046677">
    <property type="term" value="P:response to antibiotic"/>
    <property type="evidence" value="ECO:0007669"/>
    <property type="project" value="UniProtKB-KW"/>
</dbReference>
<dbReference type="FunFam" id="1.10.10.60:FF:000013">
    <property type="entry name" value="DNA-binding transcriptional activator MarA"/>
    <property type="match status" value="1"/>
</dbReference>
<dbReference type="Gene3D" id="1.10.10.60">
    <property type="entry name" value="Homeodomain-like"/>
    <property type="match status" value="2"/>
</dbReference>
<dbReference type="InterPro" id="IPR009057">
    <property type="entry name" value="Homeodomain-like_sf"/>
</dbReference>
<dbReference type="InterPro" id="IPR018060">
    <property type="entry name" value="HTH_AraC"/>
</dbReference>
<dbReference type="InterPro" id="IPR018062">
    <property type="entry name" value="HTH_AraC-typ_CS"/>
</dbReference>
<dbReference type="InterPro" id="IPR050959">
    <property type="entry name" value="MarA-like"/>
</dbReference>
<dbReference type="NCBIfam" id="NF012198">
    <property type="entry name" value="MarA_TF"/>
    <property type="match status" value="1"/>
</dbReference>
<dbReference type="NCBIfam" id="NF008564">
    <property type="entry name" value="PRK11511.1"/>
    <property type="match status" value="1"/>
</dbReference>
<dbReference type="PANTHER" id="PTHR47504:SF4">
    <property type="entry name" value="MULTIPLE ANTIBIOTIC RESISTANCE PROTEIN MARA"/>
    <property type="match status" value="1"/>
</dbReference>
<dbReference type="PANTHER" id="PTHR47504">
    <property type="entry name" value="RIGHT ORIGIN-BINDING PROTEIN"/>
    <property type="match status" value="1"/>
</dbReference>
<dbReference type="Pfam" id="PF12833">
    <property type="entry name" value="HTH_18"/>
    <property type="match status" value="1"/>
</dbReference>
<dbReference type="SMART" id="SM00342">
    <property type="entry name" value="HTH_ARAC"/>
    <property type="match status" value="1"/>
</dbReference>
<dbReference type="SUPFAM" id="SSF46689">
    <property type="entry name" value="Homeodomain-like"/>
    <property type="match status" value="2"/>
</dbReference>
<dbReference type="PROSITE" id="PS00041">
    <property type="entry name" value="HTH_ARAC_FAMILY_1"/>
    <property type="match status" value="1"/>
</dbReference>
<dbReference type="PROSITE" id="PS01124">
    <property type="entry name" value="HTH_ARAC_FAMILY_2"/>
    <property type="match status" value="1"/>
</dbReference>
<protein>
    <recommendedName>
        <fullName>Multiple antibiotic resistance protein MarA</fullName>
    </recommendedName>
</protein>
<keyword id="KW-0010">Activator</keyword>
<keyword id="KW-0046">Antibiotic resistance</keyword>
<keyword id="KW-0238">DNA-binding</keyword>
<keyword id="KW-0677">Repeat</keyword>
<keyword id="KW-0804">Transcription</keyword>
<keyword id="KW-0805">Transcription regulation</keyword>
<sequence>MSRRNTDAITIHSILDWIEDNLESPLSLEKVSERSGYSKWHLQRMFKKETGHSLGQYIRSRKMTEIAQKLKESNEPILYLAERYGFESQQTLTRTFKNYFDVPPHKYRITNMHGESRYMLPLNHGNY</sequence>
<accession>P0A2S6</accession>
<accession>Q56070</accession>
<reference key="1">
    <citation type="journal article" date="2000" name="FEMS Microbiol. Lett.">
        <title>Prevalence of the multiple antibiotic resistance operon (marRAB) in the genus Salmonella.</title>
        <authorList>
            <person name="Kunonga N.I."/>
            <person name="Sobieski R.J."/>
            <person name="Crupper S.S."/>
        </authorList>
    </citation>
    <scope>NUCLEOTIDE SEQUENCE [GENOMIC DNA]</scope>
</reference>
<organism>
    <name type="scientific">Salmonella enteritidis</name>
    <dbReference type="NCBI Taxonomy" id="149539"/>
    <lineage>
        <taxon>Bacteria</taxon>
        <taxon>Pseudomonadati</taxon>
        <taxon>Pseudomonadota</taxon>
        <taxon>Gammaproteobacteria</taxon>
        <taxon>Enterobacterales</taxon>
        <taxon>Enterobacteriaceae</taxon>
        <taxon>Salmonella</taxon>
    </lineage>
</organism>
<comment type="function">
    <text>May be a transcriptional activator of genes involved in the multiple antibiotic resistance (Mar) phenotype. It can also activate genes such as sodA, zwf and micF.</text>
</comment>
<comment type="subunit">
    <text evidence="1">Monomer.</text>
</comment>
<comment type="sequence caution" evidence="3">
    <conflict type="erroneous initiation">
        <sequence resource="EMBL-CDS" id="AAF61916"/>
    </conflict>
</comment>
<name>MARA_SALEN</name>
<proteinExistence type="inferred from homology"/>
<gene>
    <name type="primary">marA</name>
</gene>
<evidence type="ECO:0000250" key="1"/>
<evidence type="ECO:0000255" key="2">
    <source>
        <dbReference type="PROSITE-ProRule" id="PRU00593"/>
    </source>
</evidence>
<evidence type="ECO:0000305" key="3"/>
<feature type="chain" id="PRO_0000194533" description="Multiple antibiotic resistance protein MarA">
    <location>
        <begin position="1"/>
        <end position="127"/>
    </location>
</feature>
<feature type="domain" description="HTH araC/xylS-type" evidence="2">
    <location>
        <begin position="12"/>
        <end position="110"/>
    </location>
</feature>
<feature type="DNA-binding region" description="H-T-H motif" evidence="2">
    <location>
        <begin position="29"/>
        <end position="50"/>
    </location>
</feature>
<feature type="DNA-binding region" description="H-T-H motif" evidence="2">
    <location>
        <begin position="77"/>
        <end position="100"/>
    </location>
</feature>